<gene>
    <name evidence="1" type="primary">rpl10e</name>
    <name type="ordered locus">PF1279</name>
</gene>
<protein>
    <recommendedName>
        <fullName evidence="1">Large ribosomal subunit protein uL16</fullName>
    </recommendedName>
    <alternativeName>
        <fullName>50S ribosomal protein L10e</fullName>
    </alternativeName>
</protein>
<dbReference type="EMBL" id="AF156097">
    <property type="protein sequence ID" value="AAF03230.1"/>
    <property type="molecule type" value="Genomic_DNA"/>
</dbReference>
<dbReference type="EMBL" id="AE009950">
    <property type="protein sequence ID" value="AAL81403.1"/>
    <property type="molecule type" value="Genomic_DNA"/>
</dbReference>
<dbReference type="PIR" id="T44572">
    <property type="entry name" value="T44572"/>
</dbReference>
<dbReference type="RefSeq" id="WP_011012423.1">
    <property type="nucleotide sequence ID" value="NZ_CP023154.1"/>
</dbReference>
<dbReference type="PDB" id="4V6U">
    <property type="method" value="EM"/>
    <property type="resolution" value="6.60 A"/>
    <property type="chains" value="BN=1-181"/>
</dbReference>
<dbReference type="PDBsum" id="4V6U"/>
<dbReference type="SMR" id="Q9UWP5"/>
<dbReference type="STRING" id="186497.PF1279"/>
<dbReference type="PaxDb" id="186497-PF1279"/>
<dbReference type="KEGG" id="pfu:PF1279"/>
<dbReference type="PATRIC" id="fig|186497.12.peg.1341"/>
<dbReference type="eggNOG" id="arCOG04113">
    <property type="taxonomic scope" value="Archaea"/>
</dbReference>
<dbReference type="HOGENOM" id="CLU_084051_0_2_2"/>
<dbReference type="OrthoDB" id="30538at2157"/>
<dbReference type="PhylomeDB" id="Q9UWP5"/>
<dbReference type="Proteomes" id="UP000001013">
    <property type="component" value="Chromosome"/>
</dbReference>
<dbReference type="GO" id="GO:1990904">
    <property type="term" value="C:ribonucleoprotein complex"/>
    <property type="evidence" value="ECO:0007669"/>
    <property type="project" value="UniProtKB-KW"/>
</dbReference>
<dbReference type="GO" id="GO:0005840">
    <property type="term" value="C:ribosome"/>
    <property type="evidence" value="ECO:0007669"/>
    <property type="project" value="UniProtKB-KW"/>
</dbReference>
<dbReference type="GO" id="GO:0003735">
    <property type="term" value="F:structural constituent of ribosome"/>
    <property type="evidence" value="ECO:0007669"/>
    <property type="project" value="InterPro"/>
</dbReference>
<dbReference type="GO" id="GO:0006412">
    <property type="term" value="P:translation"/>
    <property type="evidence" value="ECO:0007669"/>
    <property type="project" value="UniProtKB-UniRule"/>
</dbReference>
<dbReference type="CDD" id="cd01433">
    <property type="entry name" value="Ribosomal_L16_L10e"/>
    <property type="match status" value="1"/>
</dbReference>
<dbReference type="Gene3D" id="3.90.1170.10">
    <property type="entry name" value="Ribosomal protein L10e/L16"/>
    <property type="match status" value="1"/>
</dbReference>
<dbReference type="HAMAP" id="MF_00448">
    <property type="entry name" value="Ribosomal_uL16_arch"/>
    <property type="match status" value="1"/>
</dbReference>
<dbReference type="InterPro" id="IPR047873">
    <property type="entry name" value="Ribosomal_uL16"/>
</dbReference>
<dbReference type="InterPro" id="IPR022981">
    <property type="entry name" value="Ribosomal_uL16_arc"/>
</dbReference>
<dbReference type="InterPro" id="IPR018255">
    <property type="entry name" value="Ribosomal_uL16_CS_euk_arc"/>
</dbReference>
<dbReference type="InterPro" id="IPR016180">
    <property type="entry name" value="Ribosomal_uL16_dom"/>
</dbReference>
<dbReference type="InterPro" id="IPR001197">
    <property type="entry name" value="Ribosomal_uL16_euk_arch"/>
</dbReference>
<dbReference type="InterPro" id="IPR036920">
    <property type="entry name" value="Ribosomal_uL16_sf"/>
</dbReference>
<dbReference type="NCBIfam" id="NF003237">
    <property type="entry name" value="PRK04199.1-2"/>
    <property type="match status" value="1"/>
</dbReference>
<dbReference type="NCBIfam" id="NF003239">
    <property type="entry name" value="PRK04199.1-4"/>
    <property type="match status" value="1"/>
</dbReference>
<dbReference type="PANTHER" id="PTHR11726">
    <property type="entry name" value="60S RIBOSOMAL PROTEIN L10"/>
    <property type="match status" value="1"/>
</dbReference>
<dbReference type="Pfam" id="PF00252">
    <property type="entry name" value="Ribosomal_L16"/>
    <property type="match status" value="1"/>
</dbReference>
<dbReference type="PIRSF" id="PIRSF005590">
    <property type="entry name" value="Ribosomal_L10"/>
    <property type="match status" value="1"/>
</dbReference>
<dbReference type="SUPFAM" id="SSF54686">
    <property type="entry name" value="Ribosomal protein L16p/L10e"/>
    <property type="match status" value="1"/>
</dbReference>
<dbReference type="PROSITE" id="PS01257">
    <property type="entry name" value="RIBOSOMAL_L10E"/>
    <property type="match status" value="1"/>
</dbReference>
<keyword id="KW-0002">3D-structure</keyword>
<keyword id="KW-1185">Reference proteome</keyword>
<keyword id="KW-0687">Ribonucleoprotein</keyword>
<keyword id="KW-0689">Ribosomal protein</keyword>
<name>RL10E_PYRFU</name>
<comment type="subunit">
    <text evidence="2">Part of the 50S ribosomal subunit.</text>
</comment>
<comment type="similarity">
    <text evidence="1">Belongs to the universal ribosomal protein uL16 family.</text>
</comment>
<reference key="1">
    <citation type="journal article" date="1999" name="Science">
        <title>Anaerobic microbes: oxygen detoxification without superoxide dismutase.</title>
        <authorList>
            <person name="Jenney F.E. Jr."/>
            <person name="Verhagen M.F.J.M."/>
            <person name="Cui X."/>
            <person name="Adams M.W.W."/>
        </authorList>
    </citation>
    <scope>NUCLEOTIDE SEQUENCE [GENOMIC DNA]</scope>
    <source>
        <strain>ATCC 43587 / DSM 3638 / JCM 8422 / Vc1</strain>
    </source>
</reference>
<reference key="2">
    <citation type="journal article" date="1999" name="Genetics">
        <title>Divergence of the hyperthermophilic archaea Pyrococcus furiosus and P. horikoshii inferred from complete genomic sequences.</title>
        <authorList>
            <person name="Maeder D.L."/>
            <person name="Weiss R.B."/>
            <person name="Dunn D.M."/>
            <person name="Cherry J.L."/>
            <person name="Gonzalez J.M."/>
            <person name="DiRuggiero J."/>
            <person name="Robb F.T."/>
        </authorList>
    </citation>
    <scope>NUCLEOTIDE SEQUENCE [LARGE SCALE GENOMIC DNA]</scope>
    <source>
        <strain>ATCC 43587 / DSM 3638 / JCM 8422 / Vc1</strain>
    </source>
</reference>
<reference evidence="3" key="3">
    <citation type="journal article" date="2013" name="Nucleic Acids Res.">
        <title>Promiscuous behaviour of archaeal ribosomal proteins: implications for eukaryotic ribosome evolution.</title>
        <authorList>
            <person name="Armache J.P."/>
            <person name="Anger A.M."/>
            <person name="Marquez V."/>
            <person name="Franckenberg S."/>
            <person name="Frohlich T."/>
            <person name="Villa E."/>
            <person name="Berninghausen O."/>
            <person name="Thomm M."/>
            <person name="Arnold G.J."/>
            <person name="Beckmann R."/>
            <person name="Wilson D.N."/>
        </authorList>
    </citation>
    <scope>STRUCTURE BY ELECTRON MICROSCOPY (6.60 ANGSTROMS) IN THE 70S RIBOSOME</scope>
    <scope>SUBUNIT</scope>
</reference>
<feature type="chain" id="PRO_0000147144" description="Large ribosomal subunit protein uL16">
    <location>
        <begin position="1"/>
        <end position="181"/>
    </location>
</feature>
<sequence length="181" mass="20935">MALRPAKIDRYVDKPAYTRREYIRGAPGPKITIFDMGNPAGDFEFEVSLHTAEPVQIRQNALEAARQQVNRYLQKNVGRSNYHFKIRVYPFQVLRENPMATGRKADRYGNGMRRPFGKPIGLAARLKKDQKILSIRVNRQHLKFAIEGARRAAMKFPCKCYYRIYDKEGNDVTTKILSQSL</sequence>
<proteinExistence type="evidence at protein level"/>
<organism>
    <name type="scientific">Pyrococcus furiosus (strain ATCC 43587 / DSM 3638 / JCM 8422 / Vc1)</name>
    <dbReference type="NCBI Taxonomy" id="186497"/>
    <lineage>
        <taxon>Archaea</taxon>
        <taxon>Methanobacteriati</taxon>
        <taxon>Methanobacteriota</taxon>
        <taxon>Thermococci</taxon>
        <taxon>Thermococcales</taxon>
        <taxon>Thermococcaceae</taxon>
        <taxon>Pyrococcus</taxon>
    </lineage>
</organism>
<evidence type="ECO:0000255" key="1">
    <source>
        <dbReference type="HAMAP-Rule" id="MF_00448"/>
    </source>
</evidence>
<evidence type="ECO:0000269" key="2">
    <source>
    </source>
</evidence>
<evidence type="ECO:0007744" key="3">
    <source>
        <dbReference type="PDB" id="4V6U"/>
    </source>
</evidence>
<accession>Q9UWP5</accession>